<feature type="chain" id="PRO_1000009969" description="Uracil-DNA glycosylase">
    <location>
        <begin position="1"/>
        <end position="228"/>
    </location>
</feature>
<feature type="active site" description="Proton acceptor" evidence="1">
    <location>
        <position position="64"/>
    </location>
</feature>
<keyword id="KW-0963">Cytoplasm</keyword>
<keyword id="KW-0227">DNA damage</keyword>
<keyword id="KW-0234">DNA repair</keyword>
<keyword id="KW-0378">Hydrolase</keyword>
<accession>A4TKZ2</accession>
<proteinExistence type="inferred from homology"/>
<protein>
    <recommendedName>
        <fullName evidence="1">Uracil-DNA glycosylase</fullName>
        <shortName evidence="1">UDG</shortName>
        <ecNumber evidence="1">3.2.2.27</ecNumber>
    </recommendedName>
</protein>
<evidence type="ECO:0000255" key="1">
    <source>
        <dbReference type="HAMAP-Rule" id="MF_00148"/>
    </source>
</evidence>
<name>UNG_YERPP</name>
<gene>
    <name evidence="1" type="primary">ung</name>
    <name type="ordered locus">YPDSF_1567</name>
</gene>
<dbReference type="EC" id="3.2.2.27" evidence="1"/>
<dbReference type="EMBL" id="CP000668">
    <property type="protein sequence ID" value="ABP39954.1"/>
    <property type="molecule type" value="Genomic_DNA"/>
</dbReference>
<dbReference type="RefSeq" id="WP_002209663.1">
    <property type="nucleotide sequence ID" value="NZ_CP009715.1"/>
</dbReference>
<dbReference type="SMR" id="A4TKZ2"/>
<dbReference type="GeneID" id="57975987"/>
<dbReference type="KEGG" id="ypp:YPDSF_1567"/>
<dbReference type="PATRIC" id="fig|386656.14.peg.2203"/>
<dbReference type="GO" id="GO:0005737">
    <property type="term" value="C:cytoplasm"/>
    <property type="evidence" value="ECO:0007669"/>
    <property type="project" value="UniProtKB-SubCell"/>
</dbReference>
<dbReference type="GO" id="GO:0004844">
    <property type="term" value="F:uracil DNA N-glycosylase activity"/>
    <property type="evidence" value="ECO:0007669"/>
    <property type="project" value="UniProtKB-UniRule"/>
</dbReference>
<dbReference type="GO" id="GO:0097510">
    <property type="term" value="P:base-excision repair, AP site formation via deaminated base removal"/>
    <property type="evidence" value="ECO:0007669"/>
    <property type="project" value="TreeGrafter"/>
</dbReference>
<dbReference type="CDD" id="cd10027">
    <property type="entry name" value="UDG-F1-like"/>
    <property type="match status" value="1"/>
</dbReference>
<dbReference type="FunFam" id="3.40.470.10:FF:000001">
    <property type="entry name" value="Uracil-DNA glycosylase"/>
    <property type="match status" value="1"/>
</dbReference>
<dbReference type="Gene3D" id="3.40.470.10">
    <property type="entry name" value="Uracil-DNA glycosylase-like domain"/>
    <property type="match status" value="1"/>
</dbReference>
<dbReference type="HAMAP" id="MF_00148">
    <property type="entry name" value="UDG"/>
    <property type="match status" value="1"/>
</dbReference>
<dbReference type="InterPro" id="IPR002043">
    <property type="entry name" value="UDG_fam1"/>
</dbReference>
<dbReference type="InterPro" id="IPR018085">
    <property type="entry name" value="Ura-DNA_Glyclase_AS"/>
</dbReference>
<dbReference type="InterPro" id="IPR005122">
    <property type="entry name" value="Uracil-DNA_glycosylase-like"/>
</dbReference>
<dbReference type="InterPro" id="IPR036895">
    <property type="entry name" value="Uracil-DNA_glycosylase-like_sf"/>
</dbReference>
<dbReference type="NCBIfam" id="NF003588">
    <property type="entry name" value="PRK05254.1-1"/>
    <property type="match status" value="1"/>
</dbReference>
<dbReference type="NCBIfam" id="NF003589">
    <property type="entry name" value="PRK05254.1-2"/>
    <property type="match status" value="1"/>
</dbReference>
<dbReference type="NCBIfam" id="NF003591">
    <property type="entry name" value="PRK05254.1-4"/>
    <property type="match status" value="1"/>
</dbReference>
<dbReference type="NCBIfam" id="NF003592">
    <property type="entry name" value="PRK05254.1-5"/>
    <property type="match status" value="1"/>
</dbReference>
<dbReference type="NCBIfam" id="TIGR00628">
    <property type="entry name" value="ung"/>
    <property type="match status" value="1"/>
</dbReference>
<dbReference type="PANTHER" id="PTHR11264">
    <property type="entry name" value="URACIL-DNA GLYCOSYLASE"/>
    <property type="match status" value="1"/>
</dbReference>
<dbReference type="PANTHER" id="PTHR11264:SF0">
    <property type="entry name" value="URACIL-DNA GLYCOSYLASE"/>
    <property type="match status" value="1"/>
</dbReference>
<dbReference type="Pfam" id="PF03167">
    <property type="entry name" value="UDG"/>
    <property type="match status" value="1"/>
</dbReference>
<dbReference type="SMART" id="SM00986">
    <property type="entry name" value="UDG"/>
    <property type="match status" value="1"/>
</dbReference>
<dbReference type="SMART" id="SM00987">
    <property type="entry name" value="UreE_C"/>
    <property type="match status" value="1"/>
</dbReference>
<dbReference type="SUPFAM" id="SSF52141">
    <property type="entry name" value="Uracil-DNA glycosylase-like"/>
    <property type="match status" value="1"/>
</dbReference>
<dbReference type="PROSITE" id="PS00130">
    <property type="entry name" value="U_DNA_GLYCOSYLASE"/>
    <property type="match status" value="1"/>
</dbReference>
<sequence length="228" mass="25559">MSPSLTWHDVIGQEKEQPYFKDTLAYVAAERRAGKTIYPPQKDIFNAFRLTELDQVKVVILGQDPYHGPNQAHGLSFSVLPGVPAPPSLGNIYKELVTDIPGFQRPNHGFLQSWAEQGVLLLNTVLTVEAGKAHSHANLGWETFTDKVIAALNEHREGVIFMLWGSHAQKKGRIINTERHYILKAPHPSPLSAHRGFLGCKHFSQANQLLQQQNQQPIDWQPKLPAVE</sequence>
<organism>
    <name type="scientific">Yersinia pestis (strain Pestoides F)</name>
    <dbReference type="NCBI Taxonomy" id="386656"/>
    <lineage>
        <taxon>Bacteria</taxon>
        <taxon>Pseudomonadati</taxon>
        <taxon>Pseudomonadota</taxon>
        <taxon>Gammaproteobacteria</taxon>
        <taxon>Enterobacterales</taxon>
        <taxon>Yersiniaceae</taxon>
        <taxon>Yersinia</taxon>
    </lineage>
</organism>
<comment type="function">
    <text evidence="1">Excises uracil residues from the DNA which can arise as a result of misincorporation of dUMP residues by DNA polymerase or due to deamination of cytosine.</text>
</comment>
<comment type="catalytic activity">
    <reaction evidence="1">
        <text>Hydrolyzes single-stranded DNA or mismatched double-stranded DNA and polynucleotides, releasing free uracil.</text>
        <dbReference type="EC" id="3.2.2.27"/>
    </reaction>
</comment>
<comment type="subcellular location">
    <subcellularLocation>
        <location evidence="1">Cytoplasm</location>
    </subcellularLocation>
</comment>
<comment type="similarity">
    <text evidence="1">Belongs to the uracil-DNA glycosylase (UDG) superfamily. UNG family.</text>
</comment>
<reference key="1">
    <citation type="submission" date="2007-02" db="EMBL/GenBank/DDBJ databases">
        <title>Complete sequence of chromosome of Yersinia pestis Pestoides F.</title>
        <authorList>
            <consortium name="US DOE Joint Genome Institute"/>
            <person name="Copeland A."/>
            <person name="Lucas S."/>
            <person name="Lapidus A."/>
            <person name="Barry K."/>
            <person name="Detter J.C."/>
            <person name="Glavina del Rio T."/>
            <person name="Hammon N."/>
            <person name="Israni S."/>
            <person name="Dalin E."/>
            <person name="Tice H."/>
            <person name="Pitluck S."/>
            <person name="Di Bartolo G."/>
            <person name="Chain P."/>
            <person name="Malfatti S."/>
            <person name="Shin M."/>
            <person name="Vergez L."/>
            <person name="Schmutz J."/>
            <person name="Larimer F."/>
            <person name="Land M."/>
            <person name="Hauser L."/>
            <person name="Worsham P."/>
            <person name="Chu M."/>
            <person name="Bearden S."/>
            <person name="Garcia E."/>
            <person name="Richardson P."/>
        </authorList>
    </citation>
    <scope>NUCLEOTIDE SEQUENCE [LARGE SCALE GENOMIC DNA]</scope>
    <source>
        <strain>Pestoides F</strain>
    </source>
</reference>